<name>PFDA_PYRAE</name>
<protein>
    <recommendedName>
        <fullName>Prefoldin subunit alpha</fullName>
    </recommendedName>
    <alternativeName>
        <fullName>GimC subunit alpha</fullName>
    </alternativeName>
</protein>
<keyword id="KW-0143">Chaperone</keyword>
<keyword id="KW-0963">Cytoplasm</keyword>
<keyword id="KW-1185">Reference proteome</keyword>
<comment type="function">
    <text evidence="1">Molecular chaperone capable of stabilizing a range of proteins. Seems to fulfill an ATP-independent, HSP70-like function in archaeal de novo protein folding (By similarity).</text>
</comment>
<comment type="subunit">
    <text evidence="1">Heterohexamer of two alpha and four beta subunits.</text>
</comment>
<comment type="subcellular location">
    <subcellularLocation>
        <location evidence="1">Cytoplasm</location>
    </subcellularLocation>
</comment>
<comment type="similarity">
    <text evidence="2">Belongs to the prefoldin subunit alpha family.</text>
</comment>
<dbReference type="EMBL" id="AE009441">
    <property type="protein sequence ID" value="AAL64670.1"/>
    <property type="molecule type" value="Genomic_DNA"/>
</dbReference>
<dbReference type="RefSeq" id="WP_011009138.1">
    <property type="nucleotide sequence ID" value="NC_003364.1"/>
</dbReference>
<dbReference type="SMR" id="Q8ZTT9"/>
<dbReference type="FunCoup" id="Q8ZTT9">
    <property type="interactions" value="2"/>
</dbReference>
<dbReference type="STRING" id="178306.PAE3099"/>
<dbReference type="EnsemblBacteria" id="AAL64670">
    <property type="protein sequence ID" value="AAL64670"/>
    <property type="gene ID" value="PAE3099"/>
</dbReference>
<dbReference type="GeneID" id="1463846"/>
<dbReference type="KEGG" id="pai:PAE3099"/>
<dbReference type="PATRIC" id="fig|178306.9.peg.2329"/>
<dbReference type="eggNOG" id="arCOG01341">
    <property type="taxonomic scope" value="Archaea"/>
</dbReference>
<dbReference type="HOGENOM" id="CLU_1912415_0_0_2"/>
<dbReference type="InParanoid" id="Q8ZTT9"/>
<dbReference type="Proteomes" id="UP000002439">
    <property type="component" value="Chromosome"/>
</dbReference>
<dbReference type="GO" id="GO:0005737">
    <property type="term" value="C:cytoplasm"/>
    <property type="evidence" value="ECO:0000318"/>
    <property type="project" value="GO_Central"/>
</dbReference>
<dbReference type="GO" id="GO:0016272">
    <property type="term" value="C:prefoldin complex"/>
    <property type="evidence" value="ECO:0000318"/>
    <property type="project" value="GO_Central"/>
</dbReference>
<dbReference type="GO" id="GO:0051082">
    <property type="term" value="F:unfolded protein binding"/>
    <property type="evidence" value="ECO:0007669"/>
    <property type="project" value="UniProtKB-UniRule"/>
</dbReference>
<dbReference type="GO" id="GO:0006457">
    <property type="term" value="P:protein folding"/>
    <property type="evidence" value="ECO:0007669"/>
    <property type="project" value="UniProtKB-UniRule"/>
</dbReference>
<dbReference type="CDD" id="cd23160">
    <property type="entry name" value="Prefoldin_alpha_GimC"/>
    <property type="match status" value="1"/>
</dbReference>
<dbReference type="Gene3D" id="1.10.287.370">
    <property type="match status" value="1"/>
</dbReference>
<dbReference type="HAMAP" id="MF_00308">
    <property type="entry name" value="PfdA"/>
    <property type="match status" value="1"/>
</dbReference>
<dbReference type="InterPro" id="IPR011599">
    <property type="entry name" value="PFD_alpha_archaea"/>
</dbReference>
<dbReference type="InterPro" id="IPR009053">
    <property type="entry name" value="Prefoldin"/>
</dbReference>
<dbReference type="InterPro" id="IPR004127">
    <property type="entry name" value="Prefoldin_subunit_alpha"/>
</dbReference>
<dbReference type="NCBIfam" id="TIGR00293">
    <property type="entry name" value="prefoldin subunit alpha"/>
    <property type="match status" value="1"/>
</dbReference>
<dbReference type="Pfam" id="PF02996">
    <property type="entry name" value="Prefoldin"/>
    <property type="match status" value="1"/>
</dbReference>
<dbReference type="SUPFAM" id="SSF46579">
    <property type="entry name" value="Prefoldin"/>
    <property type="match status" value="1"/>
</dbReference>
<sequence>MSRQDVQRLLEEYQLIGELLSSLQAQHATVAELLEELTTALDGVRLLKGEGGERLVHIGAGLFVKGVFEAKEVLAPLGAGYHAFLDLNNAERILQERIEEYSKLKTSLEENIEKLAERAAQIRQALERLGIR</sequence>
<reference key="1">
    <citation type="journal article" date="2002" name="Proc. Natl. Acad. Sci. U.S.A.">
        <title>Genome sequence of the hyperthermophilic crenarchaeon Pyrobaculum aerophilum.</title>
        <authorList>
            <person name="Fitz-Gibbon S.T."/>
            <person name="Ladner H."/>
            <person name="Kim U.-J."/>
            <person name="Stetter K.O."/>
            <person name="Simon M.I."/>
            <person name="Miller J.H."/>
        </authorList>
    </citation>
    <scope>NUCLEOTIDE SEQUENCE [LARGE SCALE GENOMIC DNA]</scope>
    <source>
        <strain>ATCC 51768 / DSM 7523 / JCM 9630 / CIP 104966 / NBRC 100827 / IM2</strain>
    </source>
</reference>
<organism>
    <name type="scientific">Pyrobaculum aerophilum (strain ATCC 51768 / DSM 7523 / JCM 9630 / CIP 104966 / NBRC 100827 / IM2)</name>
    <dbReference type="NCBI Taxonomy" id="178306"/>
    <lineage>
        <taxon>Archaea</taxon>
        <taxon>Thermoproteota</taxon>
        <taxon>Thermoprotei</taxon>
        <taxon>Thermoproteales</taxon>
        <taxon>Thermoproteaceae</taxon>
        <taxon>Pyrobaculum</taxon>
    </lineage>
</organism>
<accession>Q8ZTT9</accession>
<feature type="chain" id="PRO_0000153682" description="Prefoldin subunit alpha">
    <location>
        <begin position="1"/>
        <end position="132"/>
    </location>
</feature>
<gene>
    <name type="primary">pfdA</name>
    <name type="ordered locus">PAE3099</name>
</gene>
<evidence type="ECO:0000250" key="1"/>
<evidence type="ECO:0000305" key="2"/>
<proteinExistence type="inferred from homology"/>